<gene>
    <name evidence="1" type="primary">atpG</name>
    <name type="ordered locus">SPP_1528</name>
</gene>
<name>ATPG_STRZP</name>
<protein>
    <recommendedName>
        <fullName evidence="1">ATP synthase gamma chain</fullName>
    </recommendedName>
    <alternativeName>
        <fullName evidence="1">ATP synthase F1 sector gamma subunit</fullName>
    </alternativeName>
    <alternativeName>
        <fullName evidence="1">F-ATPase gamma subunit</fullName>
    </alternativeName>
</protein>
<keyword id="KW-0066">ATP synthesis</keyword>
<keyword id="KW-1003">Cell membrane</keyword>
<keyword id="KW-0139">CF(1)</keyword>
<keyword id="KW-0375">Hydrogen ion transport</keyword>
<keyword id="KW-0406">Ion transport</keyword>
<keyword id="KW-0472">Membrane</keyword>
<keyword id="KW-0813">Transport</keyword>
<proteinExistence type="inferred from homology"/>
<dbReference type="EMBL" id="CP000920">
    <property type="protein sequence ID" value="ACO20353.1"/>
    <property type="molecule type" value="Genomic_DNA"/>
</dbReference>
<dbReference type="RefSeq" id="WP_000301210.1">
    <property type="nucleotide sequence ID" value="NC_012467.1"/>
</dbReference>
<dbReference type="SMR" id="C1CLK7"/>
<dbReference type="KEGG" id="spp:SPP_1528"/>
<dbReference type="HOGENOM" id="CLU_050669_0_1_9"/>
<dbReference type="GO" id="GO:0005886">
    <property type="term" value="C:plasma membrane"/>
    <property type="evidence" value="ECO:0007669"/>
    <property type="project" value="UniProtKB-SubCell"/>
</dbReference>
<dbReference type="GO" id="GO:0045259">
    <property type="term" value="C:proton-transporting ATP synthase complex"/>
    <property type="evidence" value="ECO:0007669"/>
    <property type="project" value="UniProtKB-KW"/>
</dbReference>
<dbReference type="GO" id="GO:0005524">
    <property type="term" value="F:ATP binding"/>
    <property type="evidence" value="ECO:0007669"/>
    <property type="project" value="UniProtKB-UniRule"/>
</dbReference>
<dbReference type="GO" id="GO:0046933">
    <property type="term" value="F:proton-transporting ATP synthase activity, rotational mechanism"/>
    <property type="evidence" value="ECO:0007669"/>
    <property type="project" value="UniProtKB-UniRule"/>
</dbReference>
<dbReference type="GO" id="GO:0042777">
    <property type="term" value="P:proton motive force-driven plasma membrane ATP synthesis"/>
    <property type="evidence" value="ECO:0007669"/>
    <property type="project" value="UniProtKB-UniRule"/>
</dbReference>
<dbReference type="CDD" id="cd12151">
    <property type="entry name" value="F1-ATPase_gamma"/>
    <property type="match status" value="1"/>
</dbReference>
<dbReference type="FunFam" id="3.40.1380.10:FF:000002">
    <property type="entry name" value="ATP synthase gamma chain"/>
    <property type="match status" value="1"/>
</dbReference>
<dbReference type="Gene3D" id="3.40.1380.10">
    <property type="match status" value="1"/>
</dbReference>
<dbReference type="Gene3D" id="1.10.287.80">
    <property type="entry name" value="ATP synthase, gamma subunit, helix hairpin domain"/>
    <property type="match status" value="1"/>
</dbReference>
<dbReference type="HAMAP" id="MF_00815">
    <property type="entry name" value="ATP_synth_gamma_bact"/>
    <property type="match status" value="1"/>
</dbReference>
<dbReference type="InterPro" id="IPR035968">
    <property type="entry name" value="ATP_synth_F1_ATPase_gsu"/>
</dbReference>
<dbReference type="InterPro" id="IPR000131">
    <property type="entry name" value="ATP_synth_F1_gsu"/>
</dbReference>
<dbReference type="InterPro" id="IPR023632">
    <property type="entry name" value="ATP_synth_F1_gsu_CS"/>
</dbReference>
<dbReference type="NCBIfam" id="TIGR01146">
    <property type="entry name" value="ATPsyn_F1gamma"/>
    <property type="match status" value="1"/>
</dbReference>
<dbReference type="NCBIfam" id="NF004147">
    <property type="entry name" value="PRK05621.2-1"/>
    <property type="match status" value="1"/>
</dbReference>
<dbReference type="PANTHER" id="PTHR11693">
    <property type="entry name" value="ATP SYNTHASE GAMMA CHAIN"/>
    <property type="match status" value="1"/>
</dbReference>
<dbReference type="PANTHER" id="PTHR11693:SF22">
    <property type="entry name" value="ATP SYNTHASE SUBUNIT GAMMA, MITOCHONDRIAL"/>
    <property type="match status" value="1"/>
</dbReference>
<dbReference type="Pfam" id="PF00231">
    <property type="entry name" value="ATP-synt"/>
    <property type="match status" value="1"/>
</dbReference>
<dbReference type="PRINTS" id="PR00126">
    <property type="entry name" value="ATPASEGAMMA"/>
</dbReference>
<dbReference type="SUPFAM" id="SSF52943">
    <property type="entry name" value="ATP synthase (F1-ATPase), gamma subunit"/>
    <property type="match status" value="1"/>
</dbReference>
<dbReference type="PROSITE" id="PS00153">
    <property type="entry name" value="ATPASE_GAMMA"/>
    <property type="match status" value="1"/>
</dbReference>
<accession>C1CLK7</accession>
<reference key="1">
    <citation type="journal article" date="2010" name="Genome Biol.">
        <title>Structure and dynamics of the pan-genome of Streptococcus pneumoniae and closely related species.</title>
        <authorList>
            <person name="Donati C."/>
            <person name="Hiller N.L."/>
            <person name="Tettelin H."/>
            <person name="Muzzi A."/>
            <person name="Croucher N.J."/>
            <person name="Angiuoli S.V."/>
            <person name="Oggioni M."/>
            <person name="Dunning Hotopp J.C."/>
            <person name="Hu F.Z."/>
            <person name="Riley D.R."/>
            <person name="Covacci A."/>
            <person name="Mitchell T.J."/>
            <person name="Bentley S.D."/>
            <person name="Kilian M."/>
            <person name="Ehrlich G.D."/>
            <person name="Rappuoli R."/>
            <person name="Moxon E.R."/>
            <person name="Masignani V."/>
        </authorList>
    </citation>
    <scope>NUCLEOTIDE SEQUENCE [LARGE SCALE GENOMIC DNA]</scope>
    <source>
        <strain>P1031</strain>
    </source>
</reference>
<sequence>MAVSLNDIKTKIASTKNTSQITNAMQMVSAAKLGRSEEAARNFQVYAQKVRKLLTDILHGNGAGASTNPMLISRSVKKTGYIVITSDRGLVGGYNSSILKAVMELKEEYHPDGKGFEMICIGGMGADFFKARGIQPLYELRGLADQPSFDQVRKIISKTVEMYQNELFDELYVCYNHHVNTLTSQMRVEQMLPIVDLDPNEADEEYSLTFELETSREEILEQLLPQFAESMIYGAIIDAKTAENAAGMTAMQTATDNAKKVINDLTIQYNRARQAAITQEITEIVAGASALE</sequence>
<comment type="function">
    <text evidence="1">Produces ATP from ADP in the presence of a proton gradient across the membrane. The gamma chain is believed to be important in regulating ATPase activity and the flow of protons through the CF(0) complex.</text>
</comment>
<comment type="subunit">
    <text evidence="1">F-type ATPases have 2 components, CF(1) - the catalytic core - and CF(0) - the membrane proton channel. CF(1) has five subunits: alpha(3), beta(3), gamma(1), delta(1), epsilon(1). CF(0) has three main subunits: a, b and c.</text>
</comment>
<comment type="subcellular location">
    <subcellularLocation>
        <location evidence="1">Cell membrane</location>
        <topology evidence="1">Peripheral membrane protein</topology>
    </subcellularLocation>
</comment>
<comment type="similarity">
    <text evidence="1">Belongs to the ATPase gamma chain family.</text>
</comment>
<evidence type="ECO:0000255" key="1">
    <source>
        <dbReference type="HAMAP-Rule" id="MF_00815"/>
    </source>
</evidence>
<feature type="chain" id="PRO_1000148643" description="ATP synthase gamma chain">
    <location>
        <begin position="1"/>
        <end position="292"/>
    </location>
</feature>
<organism>
    <name type="scientific">Streptococcus pneumoniae (strain P1031)</name>
    <dbReference type="NCBI Taxonomy" id="488223"/>
    <lineage>
        <taxon>Bacteria</taxon>
        <taxon>Bacillati</taxon>
        <taxon>Bacillota</taxon>
        <taxon>Bacilli</taxon>
        <taxon>Lactobacillales</taxon>
        <taxon>Streptococcaceae</taxon>
        <taxon>Streptococcus</taxon>
    </lineage>
</organism>